<evidence type="ECO:0000255" key="1">
    <source>
        <dbReference type="HAMAP-Rule" id="MF_00042"/>
    </source>
</evidence>
<evidence type="ECO:0000255" key="2">
    <source>
        <dbReference type="PROSITE-ProRule" id="PRU00408"/>
    </source>
</evidence>
<accession>B5Y1G2</accession>
<name>RNH_KLEP3</name>
<organism>
    <name type="scientific">Klebsiella pneumoniae (strain 342)</name>
    <dbReference type="NCBI Taxonomy" id="507522"/>
    <lineage>
        <taxon>Bacteria</taxon>
        <taxon>Pseudomonadati</taxon>
        <taxon>Pseudomonadota</taxon>
        <taxon>Gammaproteobacteria</taxon>
        <taxon>Enterobacterales</taxon>
        <taxon>Enterobacteriaceae</taxon>
        <taxon>Klebsiella/Raoultella group</taxon>
        <taxon>Klebsiella</taxon>
        <taxon>Klebsiella pneumoniae complex</taxon>
    </lineage>
</organism>
<gene>
    <name evidence="1" type="primary">rnhA</name>
    <name type="ordered locus">KPK_4506</name>
</gene>
<proteinExistence type="inferred from homology"/>
<keyword id="KW-0963">Cytoplasm</keyword>
<keyword id="KW-0255">Endonuclease</keyword>
<keyword id="KW-0378">Hydrolase</keyword>
<keyword id="KW-0460">Magnesium</keyword>
<keyword id="KW-0479">Metal-binding</keyword>
<keyword id="KW-0540">Nuclease</keyword>
<dbReference type="EC" id="3.1.26.4" evidence="1"/>
<dbReference type="EMBL" id="CP000964">
    <property type="protein sequence ID" value="ACI07541.1"/>
    <property type="molecule type" value="Genomic_DNA"/>
</dbReference>
<dbReference type="SMR" id="B5Y1G2"/>
<dbReference type="KEGG" id="kpe:KPK_4506"/>
<dbReference type="HOGENOM" id="CLU_030894_6_0_6"/>
<dbReference type="Proteomes" id="UP000001734">
    <property type="component" value="Chromosome"/>
</dbReference>
<dbReference type="GO" id="GO:0005737">
    <property type="term" value="C:cytoplasm"/>
    <property type="evidence" value="ECO:0007669"/>
    <property type="project" value="UniProtKB-SubCell"/>
</dbReference>
<dbReference type="GO" id="GO:0000287">
    <property type="term" value="F:magnesium ion binding"/>
    <property type="evidence" value="ECO:0007669"/>
    <property type="project" value="UniProtKB-UniRule"/>
</dbReference>
<dbReference type="GO" id="GO:0003676">
    <property type="term" value="F:nucleic acid binding"/>
    <property type="evidence" value="ECO:0007669"/>
    <property type="project" value="InterPro"/>
</dbReference>
<dbReference type="GO" id="GO:0004523">
    <property type="term" value="F:RNA-DNA hybrid ribonuclease activity"/>
    <property type="evidence" value="ECO:0007669"/>
    <property type="project" value="UniProtKB-UniRule"/>
</dbReference>
<dbReference type="GO" id="GO:0043137">
    <property type="term" value="P:DNA replication, removal of RNA primer"/>
    <property type="evidence" value="ECO:0007669"/>
    <property type="project" value="TreeGrafter"/>
</dbReference>
<dbReference type="CDD" id="cd09278">
    <property type="entry name" value="RNase_HI_prokaryote_like"/>
    <property type="match status" value="1"/>
</dbReference>
<dbReference type="FunFam" id="3.30.420.10:FF:000008">
    <property type="entry name" value="Ribonuclease H"/>
    <property type="match status" value="1"/>
</dbReference>
<dbReference type="Gene3D" id="3.30.420.10">
    <property type="entry name" value="Ribonuclease H-like superfamily/Ribonuclease H"/>
    <property type="match status" value="1"/>
</dbReference>
<dbReference type="HAMAP" id="MF_00042">
    <property type="entry name" value="RNase_H"/>
    <property type="match status" value="1"/>
</dbReference>
<dbReference type="InterPro" id="IPR050092">
    <property type="entry name" value="RNase_H"/>
</dbReference>
<dbReference type="InterPro" id="IPR012337">
    <property type="entry name" value="RNaseH-like_sf"/>
</dbReference>
<dbReference type="InterPro" id="IPR002156">
    <property type="entry name" value="RNaseH_domain"/>
</dbReference>
<dbReference type="InterPro" id="IPR036397">
    <property type="entry name" value="RNaseH_sf"/>
</dbReference>
<dbReference type="InterPro" id="IPR022892">
    <property type="entry name" value="RNaseHI"/>
</dbReference>
<dbReference type="NCBIfam" id="NF001236">
    <property type="entry name" value="PRK00203.1"/>
    <property type="match status" value="1"/>
</dbReference>
<dbReference type="PANTHER" id="PTHR10642">
    <property type="entry name" value="RIBONUCLEASE H1"/>
    <property type="match status" value="1"/>
</dbReference>
<dbReference type="PANTHER" id="PTHR10642:SF26">
    <property type="entry name" value="RIBONUCLEASE H1"/>
    <property type="match status" value="1"/>
</dbReference>
<dbReference type="Pfam" id="PF00075">
    <property type="entry name" value="RNase_H"/>
    <property type="match status" value="1"/>
</dbReference>
<dbReference type="SUPFAM" id="SSF53098">
    <property type="entry name" value="Ribonuclease H-like"/>
    <property type="match status" value="1"/>
</dbReference>
<dbReference type="PROSITE" id="PS50879">
    <property type="entry name" value="RNASE_H_1"/>
    <property type="match status" value="1"/>
</dbReference>
<protein>
    <recommendedName>
        <fullName evidence="1">Ribonuclease H</fullName>
        <shortName evidence="1">RNase H</shortName>
        <ecNumber evidence="1">3.1.26.4</ecNumber>
    </recommendedName>
</protein>
<sequence length="155" mass="17657">MLKQVEIFTDGSCLGNPGPGGYGAIMRYRQHEKTFSAGYRLTTNNRMELMAAIVALEALKEHCEVVLSTDSQYVRQGITQWIHNWKKRGWKTAEKKPVKNVDLWQRLDAALGQHKIKWEWVKGHAGHPENERCDELARAAASHPTQDDIGYQPES</sequence>
<comment type="function">
    <text evidence="1">Endonuclease that specifically degrades the RNA of RNA-DNA hybrids.</text>
</comment>
<comment type="catalytic activity">
    <reaction evidence="1">
        <text>Endonucleolytic cleavage to 5'-phosphomonoester.</text>
        <dbReference type="EC" id="3.1.26.4"/>
    </reaction>
</comment>
<comment type="cofactor">
    <cofactor evidence="1">
        <name>Mg(2+)</name>
        <dbReference type="ChEBI" id="CHEBI:18420"/>
    </cofactor>
    <text evidence="1">Binds 1 Mg(2+) ion per subunit. May bind a second metal ion at a regulatory site, or after substrate binding.</text>
</comment>
<comment type="subunit">
    <text evidence="1">Monomer.</text>
</comment>
<comment type="subcellular location">
    <subcellularLocation>
        <location evidence="1">Cytoplasm</location>
    </subcellularLocation>
</comment>
<comment type="similarity">
    <text evidence="1">Belongs to the RNase H family.</text>
</comment>
<reference key="1">
    <citation type="journal article" date="2008" name="PLoS Genet.">
        <title>Complete genome sequence of the N2-fixing broad host range endophyte Klebsiella pneumoniae 342 and virulence predictions verified in mice.</title>
        <authorList>
            <person name="Fouts D.E."/>
            <person name="Tyler H.L."/>
            <person name="DeBoy R.T."/>
            <person name="Daugherty S."/>
            <person name="Ren Q."/>
            <person name="Badger J.H."/>
            <person name="Durkin A.S."/>
            <person name="Huot H."/>
            <person name="Shrivastava S."/>
            <person name="Kothari S."/>
            <person name="Dodson R.J."/>
            <person name="Mohamoud Y."/>
            <person name="Khouri H."/>
            <person name="Roesch L.F.W."/>
            <person name="Krogfelt K.A."/>
            <person name="Struve C."/>
            <person name="Triplett E.W."/>
            <person name="Methe B.A."/>
        </authorList>
    </citation>
    <scope>NUCLEOTIDE SEQUENCE [LARGE SCALE GENOMIC DNA]</scope>
    <source>
        <strain>342</strain>
    </source>
</reference>
<feature type="chain" id="PRO_1000090903" description="Ribonuclease H">
    <location>
        <begin position="1"/>
        <end position="155"/>
    </location>
</feature>
<feature type="domain" description="RNase H type-1" evidence="2">
    <location>
        <begin position="1"/>
        <end position="142"/>
    </location>
</feature>
<feature type="binding site" evidence="1">
    <location>
        <position position="10"/>
    </location>
    <ligand>
        <name>Mg(2+)</name>
        <dbReference type="ChEBI" id="CHEBI:18420"/>
        <label>1</label>
    </ligand>
</feature>
<feature type="binding site" evidence="1">
    <location>
        <position position="10"/>
    </location>
    <ligand>
        <name>Mg(2+)</name>
        <dbReference type="ChEBI" id="CHEBI:18420"/>
        <label>2</label>
    </ligand>
</feature>
<feature type="binding site" evidence="1">
    <location>
        <position position="48"/>
    </location>
    <ligand>
        <name>Mg(2+)</name>
        <dbReference type="ChEBI" id="CHEBI:18420"/>
        <label>1</label>
    </ligand>
</feature>
<feature type="binding site" evidence="1">
    <location>
        <position position="70"/>
    </location>
    <ligand>
        <name>Mg(2+)</name>
        <dbReference type="ChEBI" id="CHEBI:18420"/>
        <label>1</label>
    </ligand>
</feature>
<feature type="binding site" evidence="1">
    <location>
        <position position="134"/>
    </location>
    <ligand>
        <name>Mg(2+)</name>
        <dbReference type="ChEBI" id="CHEBI:18420"/>
        <label>2</label>
    </ligand>
</feature>